<protein>
    <recommendedName>
        <fullName>Dihydrolipoyl dehydrogenase</fullName>
        <ecNumber>1.8.1.4</ecNumber>
    </recommendedName>
    <alternativeName>
        <fullName>Dihydrolipoamide dehydrogenase</fullName>
    </alternativeName>
    <alternativeName>
        <fullName>E3 component of 2-oxoglutarate dehydrogenase complex</fullName>
    </alternativeName>
</protein>
<accession>O50286</accession>
<reference key="1">
    <citation type="journal article" date="1998" name="J. Bacteriol.">
        <title>OpaR, a homolog of Vibrio harveyi LuxR, controls opacity of Vibrio parahaemolyticus.</title>
        <authorList>
            <person name="McCarter L.L."/>
        </authorList>
    </citation>
    <scope>NUCLEOTIDE SEQUENCE [GENOMIC DNA]</scope>
    <source>
        <strain>BB22</strain>
    </source>
</reference>
<reference key="2">
    <citation type="journal article" date="2003" name="Lancet">
        <title>Genome sequence of Vibrio parahaemolyticus: a pathogenic mechanism distinct from that of V. cholerae.</title>
        <authorList>
            <person name="Makino K."/>
            <person name="Oshima K."/>
            <person name="Kurokawa K."/>
            <person name="Yokoyama K."/>
            <person name="Uda T."/>
            <person name="Tagomori K."/>
            <person name="Iijima Y."/>
            <person name="Najima M."/>
            <person name="Nakano M."/>
            <person name="Yamashita A."/>
            <person name="Kubota Y."/>
            <person name="Kimura S."/>
            <person name="Yasunaga T."/>
            <person name="Honda T."/>
            <person name="Shinagawa H."/>
            <person name="Hattori M."/>
            <person name="Iida T."/>
        </authorList>
    </citation>
    <scope>NUCLEOTIDE SEQUENCE [LARGE SCALE GENOMIC DNA]</scope>
    <source>
        <strain>RIMD 2210633</strain>
    </source>
</reference>
<keyword id="KW-0963">Cytoplasm</keyword>
<keyword id="KW-1015">Disulfide bond</keyword>
<keyword id="KW-0274">FAD</keyword>
<keyword id="KW-0285">Flavoprotein</keyword>
<keyword id="KW-0520">NAD</keyword>
<keyword id="KW-0560">Oxidoreductase</keyword>
<keyword id="KW-0676">Redox-active center</keyword>
<dbReference type="EC" id="1.8.1.4"/>
<dbReference type="EMBL" id="AF035967">
    <property type="protein sequence ID" value="AAC46405.1"/>
    <property type="molecule type" value="Genomic_DNA"/>
</dbReference>
<dbReference type="EMBL" id="BA000031">
    <property type="protein sequence ID" value="BAC60780.1"/>
    <property type="molecule type" value="Genomic_DNA"/>
</dbReference>
<dbReference type="RefSeq" id="NP_798896.1">
    <property type="nucleotide sequence ID" value="NC_004603.1"/>
</dbReference>
<dbReference type="SMR" id="O50286"/>
<dbReference type="GeneID" id="1190032"/>
<dbReference type="KEGG" id="vpa:VP2517"/>
<dbReference type="PATRIC" id="fig|223926.6.peg.2414"/>
<dbReference type="eggNOG" id="COG1249">
    <property type="taxonomic scope" value="Bacteria"/>
</dbReference>
<dbReference type="HOGENOM" id="CLU_016755_0_1_6"/>
<dbReference type="Proteomes" id="UP000002493">
    <property type="component" value="Chromosome 1"/>
</dbReference>
<dbReference type="GO" id="GO:0005737">
    <property type="term" value="C:cytoplasm"/>
    <property type="evidence" value="ECO:0007669"/>
    <property type="project" value="UniProtKB-SubCell"/>
</dbReference>
<dbReference type="GO" id="GO:0004148">
    <property type="term" value="F:dihydrolipoyl dehydrogenase (NADH) activity"/>
    <property type="evidence" value="ECO:0007669"/>
    <property type="project" value="UniProtKB-EC"/>
</dbReference>
<dbReference type="GO" id="GO:0050660">
    <property type="term" value="F:flavin adenine dinucleotide binding"/>
    <property type="evidence" value="ECO:0007669"/>
    <property type="project" value="InterPro"/>
</dbReference>
<dbReference type="GO" id="GO:0006103">
    <property type="term" value="P:2-oxoglutarate metabolic process"/>
    <property type="evidence" value="ECO:0007669"/>
    <property type="project" value="TreeGrafter"/>
</dbReference>
<dbReference type="FunFam" id="3.30.390.30:FF:000001">
    <property type="entry name" value="Dihydrolipoyl dehydrogenase"/>
    <property type="match status" value="1"/>
</dbReference>
<dbReference type="Gene3D" id="3.30.390.30">
    <property type="match status" value="1"/>
</dbReference>
<dbReference type="Gene3D" id="3.50.50.60">
    <property type="entry name" value="FAD/NAD(P)-binding domain"/>
    <property type="match status" value="2"/>
</dbReference>
<dbReference type="InterPro" id="IPR050151">
    <property type="entry name" value="Class-I_Pyr_Nuc-Dis_Oxidored"/>
</dbReference>
<dbReference type="InterPro" id="IPR036188">
    <property type="entry name" value="FAD/NAD-bd_sf"/>
</dbReference>
<dbReference type="InterPro" id="IPR023753">
    <property type="entry name" value="FAD/NAD-binding_dom"/>
</dbReference>
<dbReference type="InterPro" id="IPR016156">
    <property type="entry name" value="FAD/NAD-linked_Rdtase_dimer_sf"/>
</dbReference>
<dbReference type="InterPro" id="IPR006258">
    <property type="entry name" value="Lipoamide_DH"/>
</dbReference>
<dbReference type="InterPro" id="IPR001100">
    <property type="entry name" value="Pyr_nuc-diS_OxRdtase"/>
</dbReference>
<dbReference type="InterPro" id="IPR004099">
    <property type="entry name" value="Pyr_nucl-diS_OxRdtase_dimer"/>
</dbReference>
<dbReference type="InterPro" id="IPR012999">
    <property type="entry name" value="Pyr_OxRdtase_I_AS"/>
</dbReference>
<dbReference type="NCBIfam" id="TIGR01350">
    <property type="entry name" value="lipoamide_DH"/>
    <property type="match status" value="1"/>
</dbReference>
<dbReference type="PANTHER" id="PTHR22912:SF160">
    <property type="entry name" value="DIHYDROLIPOYL DEHYDROGENASE"/>
    <property type="match status" value="1"/>
</dbReference>
<dbReference type="PANTHER" id="PTHR22912">
    <property type="entry name" value="DISULFIDE OXIDOREDUCTASE"/>
    <property type="match status" value="1"/>
</dbReference>
<dbReference type="Pfam" id="PF07992">
    <property type="entry name" value="Pyr_redox_2"/>
    <property type="match status" value="1"/>
</dbReference>
<dbReference type="Pfam" id="PF02852">
    <property type="entry name" value="Pyr_redox_dim"/>
    <property type="match status" value="1"/>
</dbReference>
<dbReference type="PIRSF" id="PIRSF000350">
    <property type="entry name" value="Mercury_reductase_MerA"/>
    <property type="match status" value="1"/>
</dbReference>
<dbReference type="PRINTS" id="PR00368">
    <property type="entry name" value="FADPNR"/>
</dbReference>
<dbReference type="PRINTS" id="PR00411">
    <property type="entry name" value="PNDRDTASEI"/>
</dbReference>
<dbReference type="SUPFAM" id="SSF51905">
    <property type="entry name" value="FAD/NAD(P)-binding domain"/>
    <property type="match status" value="1"/>
</dbReference>
<dbReference type="SUPFAM" id="SSF55424">
    <property type="entry name" value="FAD/NAD-linked reductases, dimerisation (C-terminal) domain"/>
    <property type="match status" value="1"/>
</dbReference>
<dbReference type="PROSITE" id="PS00076">
    <property type="entry name" value="PYRIDINE_REDOX_1"/>
    <property type="match status" value="1"/>
</dbReference>
<name>DLDH_VIBPA</name>
<organism>
    <name type="scientific">Vibrio parahaemolyticus serotype O3:K6 (strain RIMD 2210633)</name>
    <dbReference type="NCBI Taxonomy" id="223926"/>
    <lineage>
        <taxon>Bacteria</taxon>
        <taxon>Pseudomonadati</taxon>
        <taxon>Pseudomonadota</taxon>
        <taxon>Gammaproteobacteria</taxon>
        <taxon>Vibrionales</taxon>
        <taxon>Vibrionaceae</taxon>
        <taxon>Vibrio</taxon>
    </lineage>
</organism>
<sequence>MSKEIKAQVVVLGSGPAGYSAAFRCADLGLETVLVERYSTLGGVCLNVGCIPSKALLHVSKVIEEAKAMADHGVVFGEPQTDINKIRIWKEKVVNQLTGGLSGMAKMRNVTVVNGYGKFTGPNSILVEGEGESTVVNFDNAIVAAGSRPIKLPFIPHEDPRIWDSTDALELKEVPEKLLIMGGGIIGLEMGTVYHSLGSKVEVVEMFDQVIPAADKDIVKVYTKRIKDKFKLMLETKVTAVEAKEDGIYVSMEGKKAPAEAERYDAVLVAIGRVPNGKLIDGEKAGLEIDERGFINVDKQMRTNVPHIFAIGDIVGQPMLAHKGVHEGHVAAEVISGKKHYFDPKVIPSIAYTEPEVAWVGKTEKEAKAEGIKYEVATFPWAASGRAIASDCSDGMTKLIFDKETHRVIGGAIVGTNGGELLGEIGLAIEMGCDAEDIALTIHAHPTLHESVGLAAEVFEGSITDLPNKKAVKKK</sequence>
<feature type="chain" id="PRO_0000068053" description="Dihydrolipoyl dehydrogenase">
    <location>
        <begin position="1"/>
        <end position="475"/>
    </location>
</feature>
<feature type="active site" description="Proton acceptor" evidence="1">
    <location>
        <position position="445"/>
    </location>
</feature>
<feature type="binding site" evidence="1">
    <location>
        <begin position="36"/>
        <end position="45"/>
    </location>
    <ligand>
        <name>FAD</name>
        <dbReference type="ChEBI" id="CHEBI:57692"/>
    </ligand>
</feature>
<feature type="binding site" evidence="1">
    <location>
        <position position="54"/>
    </location>
    <ligand>
        <name>FAD</name>
        <dbReference type="ChEBI" id="CHEBI:57692"/>
    </ligand>
</feature>
<feature type="binding site" evidence="1">
    <location>
        <position position="117"/>
    </location>
    <ligand>
        <name>FAD</name>
        <dbReference type="ChEBI" id="CHEBI:57692"/>
    </ligand>
</feature>
<feature type="binding site" evidence="1">
    <location>
        <begin position="182"/>
        <end position="186"/>
    </location>
    <ligand>
        <name>NAD(+)</name>
        <dbReference type="ChEBI" id="CHEBI:57540"/>
    </ligand>
</feature>
<feature type="binding site" evidence="1">
    <location>
        <position position="205"/>
    </location>
    <ligand>
        <name>NAD(+)</name>
        <dbReference type="ChEBI" id="CHEBI:57540"/>
    </ligand>
</feature>
<feature type="binding site" evidence="1">
    <location>
        <position position="238"/>
    </location>
    <ligand>
        <name>NAD(+)</name>
        <dbReference type="ChEBI" id="CHEBI:57540"/>
    </ligand>
</feature>
<feature type="binding site" evidence="1">
    <location>
        <begin position="270"/>
        <end position="273"/>
    </location>
    <ligand>
        <name>NAD(+)</name>
        <dbReference type="ChEBI" id="CHEBI:57540"/>
    </ligand>
</feature>
<feature type="binding site" evidence="1">
    <location>
        <position position="313"/>
    </location>
    <ligand>
        <name>FAD</name>
        <dbReference type="ChEBI" id="CHEBI:57692"/>
    </ligand>
</feature>
<feature type="binding site" evidence="1">
    <location>
        <position position="321"/>
    </location>
    <ligand>
        <name>FAD</name>
        <dbReference type="ChEBI" id="CHEBI:57692"/>
    </ligand>
</feature>
<feature type="disulfide bond" description="Redox-active" evidence="1">
    <location>
        <begin position="45"/>
        <end position="50"/>
    </location>
</feature>
<feature type="sequence conflict" description="In Ref. 1; AAC46405." evidence="2" ref="1">
    <original>P</original>
    <variation>S</variation>
    <location>
        <position position="160"/>
    </location>
</feature>
<proteinExistence type="inferred from homology"/>
<comment type="function">
    <text evidence="1">The branched-chain alpha-keto dehydrogenase complex catalyzes the overall conversion of alpha-keto acids to acyl-CoA and CO(2). It contains multiple copies of 3 enzymatic components: branched-chain alpha-keto acid decarboxylase (E1), lipoamide acyltransferase (E2) and lipoamide dehydrogenase (E3) (By similarity).</text>
</comment>
<comment type="catalytic activity">
    <reaction>
        <text>N(6)-[(R)-dihydrolipoyl]-L-lysyl-[protein] + NAD(+) = N(6)-[(R)-lipoyl]-L-lysyl-[protein] + NADH + H(+)</text>
        <dbReference type="Rhea" id="RHEA:15045"/>
        <dbReference type="Rhea" id="RHEA-COMP:10474"/>
        <dbReference type="Rhea" id="RHEA-COMP:10475"/>
        <dbReference type="ChEBI" id="CHEBI:15378"/>
        <dbReference type="ChEBI" id="CHEBI:57540"/>
        <dbReference type="ChEBI" id="CHEBI:57945"/>
        <dbReference type="ChEBI" id="CHEBI:83099"/>
        <dbReference type="ChEBI" id="CHEBI:83100"/>
        <dbReference type="EC" id="1.8.1.4"/>
    </reaction>
</comment>
<comment type="cofactor">
    <cofactor evidence="1">
        <name>FAD</name>
        <dbReference type="ChEBI" id="CHEBI:57692"/>
    </cofactor>
    <text evidence="1">Binds 1 FAD per subunit.</text>
</comment>
<comment type="subcellular location">
    <subcellularLocation>
        <location evidence="1">Cytoplasm</location>
    </subcellularLocation>
</comment>
<comment type="miscellaneous">
    <text>The active site is a redox-active disulfide bond.</text>
</comment>
<comment type="similarity">
    <text evidence="2">Belongs to the class-I pyridine nucleotide-disulfide oxidoreductase family.</text>
</comment>
<evidence type="ECO:0000250" key="1"/>
<evidence type="ECO:0000305" key="2"/>
<gene>
    <name type="primary">lpd</name>
    <name type="ordered locus">VP2517</name>
</gene>